<protein>
    <recommendedName>
        <fullName>Succinate dehydrogenase [ubiquinone] cytochrome b small subunit A, mitochondrial</fullName>
        <shortName>CybS-A</shortName>
    </recommendedName>
    <alternativeName>
        <fullName>Malate dehydrogenase [quinone] cytochrome b small subunit</fullName>
    </alternativeName>
    <alternativeName>
        <fullName>Succinate dehydrogenase complex subunit D-A</fullName>
    </alternativeName>
    <alternativeName>
        <fullName>Succinate-ubiquinone oxidoreductase cytochrome b small subunit A</fullName>
    </alternativeName>
    <alternativeName>
        <fullName>Succinate-ubiquinone reductase membrane anchor subunit A</fullName>
    </alternativeName>
</protein>
<keyword id="KW-0249">Electron transport</keyword>
<keyword id="KW-0349">Heme</keyword>
<keyword id="KW-0408">Iron</keyword>
<keyword id="KW-0472">Membrane</keyword>
<keyword id="KW-0479">Metal-binding</keyword>
<keyword id="KW-0496">Mitochondrion</keyword>
<keyword id="KW-0999">Mitochondrion inner membrane</keyword>
<keyword id="KW-1185">Reference proteome</keyword>
<keyword id="KW-0809">Transit peptide</keyword>
<keyword id="KW-0812">Transmembrane</keyword>
<keyword id="KW-1133">Transmembrane helix</keyword>
<keyword id="KW-0813">Transport</keyword>
<keyword id="KW-0816">Tricarboxylic acid cycle</keyword>
<organism>
    <name type="scientific">Xenopus laevis</name>
    <name type="common">African clawed frog</name>
    <dbReference type="NCBI Taxonomy" id="8355"/>
    <lineage>
        <taxon>Eukaryota</taxon>
        <taxon>Metazoa</taxon>
        <taxon>Chordata</taxon>
        <taxon>Craniata</taxon>
        <taxon>Vertebrata</taxon>
        <taxon>Euteleostomi</taxon>
        <taxon>Amphibia</taxon>
        <taxon>Batrachia</taxon>
        <taxon>Anura</taxon>
        <taxon>Pipoidea</taxon>
        <taxon>Pipidae</taxon>
        <taxon>Xenopodinae</taxon>
        <taxon>Xenopus</taxon>
        <taxon>Xenopus</taxon>
    </lineage>
</organism>
<comment type="function">
    <text evidence="1 2">Membrane-anchoring subunit of succinate dehydrogenase (SDH) that is involved in complex II of the mitochondrial electron transport chain and is responsible for transferring electrons from succinate to ubiquinone (coenzyme Q) (By similarity). SDH also oxidizes malate to the non-canonical enol form of oxaloacetate, enol-oxaloacetate. Enol-oxaloacetate, which is a potent inhibitor of the succinate dehydrogenase activity, is further isomerized into keto-oxaloacetate (By similarity).</text>
</comment>
<comment type="pathway">
    <text evidence="1">Carbohydrate metabolism; tricarboxylic acid cycle.</text>
</comment>
<comment type="subunit">
    <text evidence="1">Component of complex II composed of four subunits: the flavoprotein (FP) SDHA, iron-sulfur protein (IP) SDHB, and a cytochrome b560 composed of SDHC and SDHD.</text>
</comment>
<comment type="subcellular location">
    <subcellularLocation>
        <location evidence="1">Mitochondrion inner membrane</location>
        <topology evidence="3">Multi-pass membrane protein</topology>
    </subcellularLocation>
</comment>
<comment type="similarity">
    <text evidence="4">Belongs to the CybS family.</text>
</comment>
<accession>Q6AZR3</accession>
<reference key="1">
    <citation type="submission" date="2004-07" db="EMBL/GenBank/DDBJ databases">
        <authorList>
            <consortium name="NIH - Xenopus Gene Collection (XGC) project"/>
        </authorList>
    </citation>
    <scope>NUCLEOTIDE SEQUENCE [LARGE SCALE MRNA]</scope>
    <source>
        <tissue>Heart</tissue>
    </source>
</reference>
<feature type="transit peptide" description="Mitochondrion" evidence="3">
    <location>
        <begin position="1"/>
        <end position="21"/>
    </location>
</feature>
<feature type="chain" id="PRO_0000343808" description="Succinate dehydrogenase [ubiquinone] cytochrome b small subunit A, mitochondrial">
    <location>
        <begin position="22"/>
        <end position="152"/>
    </location>
</feature>
<feature type="topological domain" description="Mitochondrial matrix" evidence="1">
    <location>
        <begin position="22"/>
        <end position="56"/>
    </location>
</feature>
<feature type="transmembrane region" description="Helical" evidence="1">
    <location>
        <begin position="57"/>
        <end position="78"/>
    </location>
</feature>
<feature type="topological domain" description="Mitochondrial intermembrane" evidence="1">
    <location>
        <begin position="79"/>
        <end position="83"/>
    </location>
</feature>
<feature type="transmembrane region" description="Helical" evidence="1">
    <location>
        <begin position="84"/>
        <end position="104"/>
    </location>
</feature>
<feature type="topological domain" description="Mitochondrial matrix" evidence="1">
    <location>
        <begin position="105"/>
        <end position="113"/>
    </location>
</feature>
<feature type="transmembrane region" description="Helical" evidence="1">
    <location>
        <begin position="114"/>
        <end position="135"/>
    </location>
</feature>
<feature type="topological domain" description="Mitochondrial intermembrane" evidence="1">
    <location>
        <begin position="136"/>
        <end position="152"/>
    </location>
</feature>
<feature type="binding site" description="axial binding residue" evidence="1">
    <location>
        <position position="95"/>
    </location>
    <ligand>
        <name>heme b</name>
        <dbReference type="ChEBI" id="CHEBI:60344"/>
        <note>ligand shared with SDHC</note>
    </ligand>
    <ligandPart>
        <name>Fe</name>
        <dbReference type="ChEBI" id="CHEBI:18248"/>
    </ligandPart>
</feature>
<feature type="binding site" evidence="1">
    <location>
        <position position="107"/>
    </location>
    <ligand>
        <name>a ubiquinone</name>
        <dbReference type="ChEBI" id="CHEBI:16389"/>
        <note>ligand shared with IP/SDHB</note>
    </ligand>
</feature>
<dbReference type="EMBL" id="BC077454">
    <property type="protein sequence ID" value="AAH77454.1"/>
    <property type="molecule type" value="mRNA"/>
</dbReference>
<dbReference type="SMR" id="Q6AZR3"/>
<dbReference type="DNASU" id="494586"/>
<dbReference type="GeneID" id="494586"/>
<dbReference type="KEGG" id="xla:494586"/>
<dbReference type="AGR" id="Xenbase:XB-GENE-6255924"/>
<dbReference type="CTD" id="494586"/>
<dbReference type="Xenbase" id="XB-GENE-6255924">
    <property type="gene designation" value="sdhd.S"/>
</dbReference>
<dbReference type="OMA" id="TITQCLY"/>
<dbReference type="OrthoDB" id="18577at2759"/>
<dbReference type="UniPathway" id="UPA00223"/>
<dbReference type="Proteomes" id="UP000186698">
    <property type="component" value="Chromosome 7S"/>
</dbReference>
<dbReference type="Bgee" id="494586">
    <property type="expression patterns" value="Expressed in muscle tissue and 19 other cell types or tissues"/>
</dbReference>
<dbReference type="GO" id="GO:0005743">
    <property type="term" value="C:mitochondrial inner membrane"/>
    <property type="evidence" value="ECO:0000250"/>
    <property type="project" value="UniProtKB"/>
</dbReference>
<dbReference type="GO" id="GO:0045273">
    <property type="term" value="C:respiratory chain complex II (succinate dehydrogenase)"/>
    <property type="evidence" value="ECO:0000250"/>
    <property type="project" value="UniProtKB"/>
</dbReference>
<dbReference type="GO" id="GO:0020037">
    <property type="term" value="F:heme binding"/>
    <property type="evidence" value="ECO:0000250"/>
    <property type="project" value="UniProtKB"/>
</dbReference>
<dbReference type="GO" id="GO:0046872">
    <property type="term" value="F:metal ion binding"/>
    <property type="evidence" value="ECO:0007669"/>
    <property type="project" value="UniProtKB-KW"/>
</dbReference>
<dbReference type="GO" id="GO:0048039">
    <property type="term" value="F:ubiquinone binding"/>
    <property type="evidence" value="ECO:0000250"/>
    <property type="project" value="UniProtKB"/>
</dbReference>
<dbReference type="GO" id="GO:0006121">
    <property type="term" value="P:mitochondrial electron transport, succinate to ubiquinone"/>
    <property type="evidence" value="ECO:0000318"/>
    <property type="project" value="GO_Central"/>
</dbReference>
<dbReference type="GO" id="GO:0006099">
    <property type="term" value="P:tricarboxylic acid cycle"/>
    <property type="evidence" value="ECO:0000318"/>
    <property type="project" value="GO_Central"/>
</dbReference>
<dbReference type="CDD" id="cd03496">
    <property type="entry name" value="SQR_TypeC_CybS"/>
    <property type="match status" value="1"/>
</dbReference>
<dbReference type="FunFam" id="1.20.1300.10:FF:000009">
    <property type="entry name" value="Succinate dehydrogenase [ubiquinone] cytochrome b small subunit, mitochondrial"/>
    <property type="match status" value="1"/>
</dbReference>
<dbReference type="Gene3D" id="1.20.1300.10">
    <property type="entry name" value="Fumarate reductase/succinate dehydrogenase, transmembrane subunit"/>
    <property type="match status" value="1"/>
</dbReference>
<dbReference type="InterPro" id="IPR007992">
    <property type="entry name" value="CybS"/>
</dbReference>
<dbReference type="InterPro" id="IPR034804">
    <property type="entry name" value="SQR/QFR_C/D"/>
</dbReference>
<dbReference type="PANTHER" id="PTHR13337">
    <property type="entry name" value="SUCCINATE DEHYDROGENASE"/>
    <property type="match status" value="1"/>
</dbReference>
<dbReference type="PANTHER" id="PTHR13337:SF2">
    <property type="entry name" value="SUCCINATE DEHYDROGENASE [UBIQUINONE] CYTOCHROME B SMALL SUBUNIT, MITOCHONDRIAL"/>
    <property type="match status" value="1"/>
</dbReference>
<dbReference type="Pfam" id="PF05328">
    <property type="entry name" value="CybS"/>
    <property type="match status" value="1"/>
</dbReference>
<dbReference type="SUPFAM" id="SSF81343">
    <property type="entry name" value="Fumarate reductase respiratory complex transmembrane subunits"/>
    <property type="match status" value="1"/>
</dbReference>
<evidence type="ECO:0000250" key="1">
    <source>
        <dbReference type="UniProtKB" id="O14521"/>
    </source>
</evidence>
<evidence type="ECO:0000250" key="2">
    <source>
        <dbReference type="UniProtKB" id="Q95123"/>
    </source>
</evidence>
<evidence type="ECO:0000255" key="3"/>
<evidence type="ECO:0000305" key="4"/>
<sequence>MVTVLRLSSLCRANRASAFKSLLIRPVPCLSQDLHTVQTSQIHTSQNHHAASKAASLHWTSERALSVALLGLLPAAYLYPGAAVDYSLAAALTLHGHWGLGQVVTDYVHGDAKIKLANTSLFALSALTFAGLCYFNYHDVGICKAVAMLWSL</sequence>
<proteinExistence type="evidence at transcript level"/>
<name>DHSDA_XENLA</name>
<gene>
    <name type="primary">sdhd-a</name>
</gene>